<evidence type="ECO:0000250" key="1">
    <source>
        <dbReference type="UniProtKB" id="Q2G0D9"/>
    </source>
</evidence>
<evidence type="ECO:0000255" key="2"/>
<evidence type="ECO:0000255" key="3">
    <source>
        <dbReference type="PROSITE-ProRule" id="PRU00107"/>
    </source>
</evidence>
<evidence type="ECO:0000305" key="4"/>
<dbReference type="EC" id="2.7.13.3"/>
<dbReference type="EMBL" id="AJ938182">
    <property type="protein sequence ID" value="CAI80297.1"/>
    <property type="molecule type" value="Genomic_DNA"/>
</dbReference>
<dbReference type="RefSeq" id="WP_001061258.1">
    <property type="nucleotide sequence ID" value="NC_007622.1"/>
</dbReference>
<dbReference type="SMR" id="Q2YSS1"/>
<dbReference type="KEGG" id="sab:SAB0609"/>
<dbReference type="HOGENOM" id="CLU_000445_13_1_9"/>
<dbReference type="GO" id="GO:0005886">
    <property type="term" value="C:plasma membrane"/>
    <property type="evidence" value="ECO:0007669"/>
    <property type="project" value="UniProtKB-SubCell"/>
</dbReference>
<dbReference type="GO" id="GO:0005524">
    <property type="term" value="F:ATP binding"/>
    <property type="evidence" value="ECO:0007669"/>
    <property type="project" value="UniProtKB-KW"/>
</dbReference>
<dbReference type="GO" id="GO:0004721">
    <property type="term" value="F:phosphoprotein phosphatase activity"/>
    <property type="evidence" value="ECO:0007669"/>
    <property type="project" value="TreeGrafter"/>
</dbReference>
<dbReference type="GO" id="GO:0000155">
    <property type="term" value="F:phosphorelay sensor kinase activity"/>
    <property type="evidence" value="ECO:0007669"/>
    <property type="project" value="InterPro"/>
</dbReference>
<dbReference type="GO" id="GO:0016036">
    <property type="term" value="P:cellular response to phosphate starvation"/>
    <property type="evidence" value="ECO:0007669"/>
    <property type="project" value="TreeGrafter"/>
</dbReference>
<dbReference type="GO" id="GO:0046677">
    <property type="term" value="P:response to antibiotic"/>
    <property type="evidence" value="ECO:0007669"/>
    <property type="project" value="UniProtKB-KW"/>
</dbReference>
<dbReference type="Gene3D" id="3.30.565.10">
    <property type="entry name" value="Histidine kinase-like ATPase, C-terminal domain"/>
    <property type="match status" value="1"/>
</dbReference>
<dbReference type="InterPro" id="IPR050351">
    <property type="entry name" value="2-comp_sensor_kinase"/>
</dbReference>
<dbReference type="InterPro" id="IPR036890">
    <property type="entry name" value="HATPase_C_sf"/>
</dbReference>
<dbReference type="InterPro" id="IPR005467">
    <property type="entry name" value="His_kinase_dom"/>
</dbReference>
<dbReference type="InterPro" id="IPR036097">
    <property type="entry name" value="HisK_dim/P_sf"/>
</dbReference>
<dbReference type="InterPro" id="IPR004358">
    <property type="entry name" value="Sig_transdc_His_kin-like_C"/>
</dbReference>
<dbReference type="PANTHER" id="PTHR45453:SF2">
    <property type="entry name" value="HISTIDINE KINASE"/>
    <property type="match status" value="1"/>
</dbReference>
<dbReference type="PANTHER" id="PTHR45453">
    <property type="entry name" value="PHOSPHATE REGULON SENSOR PROTEIN PHOR"/>
    <property type="match status" value="1"/>
</dbReference>
<dbReference type="Pfam" id="PF02518">
    <property type="entry name" value="HATPase_c"/>
    <property type="match status" value="1"/>
</dbReference>
<dbReference type="PRINTS" id="PR00344">
    <property type="entry name" value="BCTRLSENSOR"/>
</dbReference>
<dbReference type="SMART" id="SM00387">
    <property type="entry name" value="HATPase_c"/>
    <property type="match status" value="1"/>
</dbReference>
<dbReference type="SUPFAM" id="SSF55874">
    <property type="entry name" value="ATPase domain of HSP90 chaperone/DNA topoisomerase II/histidine kinase"/>
    <property type="match status" value="1"/>
</dbReference>
<dbReference type="SUPFAM" id="SSF47384">
    <property type="entry name" value="Homodimeric domain of signal transducing histidine kinase"/>
    <property type="match status" value="1"/>
</dbReference>
<dbReference type="PROSITE" id="PS50109">
    <property type="entry name" value="HIS_KIN"/>
    <property type="match status" value="1"/>
</dbReference>
<name>GRAS_STAAB</name>
<feature type="chain" id="PRO_0000347913" description="Sensor protein kinase GraS">
    <location>
        <begin position="1"/>
        <end position="346"/>
    </location>
</feature>
<feature type="transmembrane region" description="Helical" evidence="2">
    <location>
        <begin position="15"/>
        <end position="35"/>
    </location>
</feature>
<feature type="transmembrane region" description="Helical" evidence="2">
    <location>
        <begin position="43"/>
        <end position="63"/>
    </location>
</feature>
<feature type="domain" description="Histidine kinase" evidence="3">
    <location>
        <begin position="126"/>
        <end position="332"/>
    </location>
</feature>
<proteinExistence type="inferred from homology"/>
<keyword id="KW-0046">Antibiotic resistance</keyword>
<keyword id="KW-0067">ATP-binding</keyword>
<keyword id="KW-1003">Cell membrane</keyword>
<keyword id="KW-0418">Kinase</keyword>
<keyword id="KW-0472">Membrane</keyword>
<keyword id="KW-0547">Nucleotide-binding</keyword>
<keyword id="KW-0808">Transferase</keyword>
<keyword id="KW-0812">Transmembrane</keyword>
<keyword id="KW-1133">Transmembrane helix</keyword>
<keyword id="KW-0902">Two-component regulatory system</keyword>
<keyword id="KW-0843">Virulence</keyword>
<organism>
    <name type="scientific">Staphylococcus aureus (strain bovine RF122 / ET3-1)</name>
    <dbReference type="NCBI Taxonomy" id="273036"/>
    <lineage>
        <taxon>Bacteria</taxon>
        <taxon>Bacillati</taxon>
        <taxon>Bacillota</taxon>
        <taxon>Bacilli</taxon>
        <taxon>Bacillales</taxon>
        <taxon>Staphylococcaceae</taxon>
        <taxon>Staphylococcus</taxon>
    </lineage>
</organism>
<comment type="function">
    <text evidence="1">Member of the two-component regulatory system GraR/GraS involved in resistance against cationic antimicrobial peptides (CAMPs). Functions as a sensor protein kinase which phosphorylates GraR through the auxiliary protein GraX. In turn, GraR up-regulates many genes such as adhesins, exoproteins, transporters, toxins, and proteins involved in cell wall synthesis. Down-regulates the expression of many genes involved in RNA and amino acid synthesis or glycolysis.</text>
</comment>
<comment type="catalytic activity">
    <reaction>
        <text>ATP + protein L-histidine = ADP + protein N-phospho-L-histidine.</text>
        <dbReference type="EC" id="2.7.13.3"/>
    </reaction>
</comment>
<comment type="subunit">
    <text evidence="1">Interacts with GraX.</text>
</comment>
<comment type="subcellular location">
    <subcellularLocation>
        <location evidence="4">Cell membrane</location>
        <topology evidence="4">Multi-pass membrane protein</topology>
    </subcellularLocation>
</comment>
<sequence>MNNLKWVAYFLKSRMNWIFWILFLNLLMLGISLIDYDFPIDSLFYIVSLNLSLTMIFLILTYFKEVKLYKHFDKDKEIEEIKHKDFAETPFQRHTVDYLYRQISAHKEKVVEQQLQLNMHEQTITEFVHDIKTPVTAMKLLIDQEKNQERKQALLYEWSRINSMLDTQLYITRLESQRKDMYFDYVSLKRMVIDEIQLTRHISQVKGIGFDVDFKVDDYVYTDIKWCRMIIRQILSNALKYSENFNIEIGTELNDQHVSLYIKDYGRGISKKDMPRIFERGFTSTANRNETTSSGMGLYLVNSVKDQLGIHLQVTSTVGKGTTVRLIFPLQNEIVERMSEVTNLSF</sequence>
<reference key="1">
    <citation type="journal article" date="2007" name="PLoS ONE">
        <title>Molecular correlates of host specialization in Staphylococcus aureus.</title>
        <authorList>
            <person name="Herron-Olson L."/>
            <person name="Fitzgerald J.R."/>
            <person name="Musser J.M."/>
            <person name="Kapur V."/>
        </authorList>
    </citation>
    <scope>NUCLEOTIDE SEQUENCE [LARGE SCALE GENOMIC DNA]</scope>
    <source>
        <strain>bovine RF122 / ET3-1</strain>
    </source>
</reference>
<protein>
    <recommendedName>
        <fullName>Sensor protein kinase GraS</fullName>
        <ecNumber>2.7.13.3</ecNumber>
    </recommendedName>
    <alternativeName>
        <fullName>Glycopeptide resistance-associated protein S</fullName>
    </alternativeName>
</protein>
<gene>
    <name type="primary">graS</name>
    <name type="ordered locus">SAB0609</name>
</gene>
<accession>Q2YSS1</accession>